<name>SYI2_BACAN</name>
<accession>Q81R75</accession>
<accession>Q6HZE8</accession>
<accession>Q6KTD8</accession>
<sequence length="1033" mass="118653">MKKVDVKESAVGREMRIRKQWNEQNIFEQSIQNREGAQSFVFYEGPPTANGLPHVGHALGRTIKDVVARYKTMAGYKVLRKAGWDTHGLPVELGVEKQLGISGKHEIEEYGIEPFIKKCKESVFTYEKQWREFTESIGYWVDMDDPYVTLENPYIESVWHILGTIHEKGLLYKGHRVSPYCPSCQTSLSSHEVAQGYKTVKDLSATVKFKVKDSENEYFLGWTTTPWTLPANVALAVHPNMEYVKAKQEGHVYIVAKERVQDVLKENYEVLSVHKGEELLNISYTAPFPMKEVTNGYRVIGADFVTADSGTGLVHIAPAYGEDDYRVVQSEGLSFLHVVDEKGEYTEAVPFLKGKFVKDCDVDIVRYLAKEDLLYHKEKYEHSYPHCWRCDSPLLYYAGESWLIRTTAIKDTFLQNNDTVTWYPDHMKHGRFGKFLENMVDWNISRNRYWGTPLNVWECERCDHQFAPKSIADLRKHSMKETPEDLELHKPYVDEVQVCCEKCGSTMNRTPEVIDVWFDSGSMPFAQYHYPFENKELFEEQFPADVIAEGIDQTRGWFYSLLAVSALYTGKVPYKRVLSLGHVLDEEGQKMSKSKGNALDPVDLVGKFGADALRWALLVDSALWNAKRFSERTVLEAKSKFVDTLVNVYSFYVLYANLDEYNPNETYDVKRTKLDEWVLSRLHSTTKKVRTALDDYQFTNAAREIAALVDEVSNWYVRRSRNRFWESGMNAEKAAAYETLHDVLVTISKLIAPFTPFVAEDVHLNLTGSSVHLEDYPVVNESLLQPKLEAEMDAVLQVVELGRSNRNQHSLKVKQPLAELVLLEHNENDMDWESYRDIVMDELNVKAFHVELDETKYTSYQLKLNFKKAGPKFGKNVNAVNGWLKQLSQDEVQNFVSTERAVYEVAPGEEIVVTTEDVLVEKVAKSGFSNTTNGQYTVMLDTNVTEELLQEGVAREFIRAVQEYRKQLNLPVNLRVDVILDTEEELQQTLTNHKELLEENLLVKQFTFGHLTNEDDELSLGETKVRIKLSTAQ</sequence>
<gene>
    <name evidence="1" type="primary">ileS2</name>
    <name type="ordered locus">BA_2181</name>
    <name type="ordered locus">GBAA_2181</name>
    <name type="ordered locus">BAS2027</name>
</gene>
<organism>
    <name type="scientific">Bacillus anthracis</name>
    <dbReference type="NCBI Taxonomy" id="1392"/>
    <lineage>
        <taxon>Bacteria</taxon>
        <taxon>Bacillati</taxon>
        <taxon>Bacillota</taxon>
        <taxon>Bacilli</taxon>
        <taxon>Bacillales</taxon>
        <taxon>Bacillaceae</taxon>
        <taxon>Bacillus</taxon>
        <taxon>Bacillus cereus group</taxon>
    </lineage>
</organism>
<evidence type="ECO:0000255" key="1">
    <source>
        <dbReference type="HAMAP-Rule" id="MF_02003"/>
    </source>
</evidence>
<proteinExistence type="inferred from homology"/>
<protein>
    <recommendedName>
        <fullName evidence="1">Isoleucine--tRNA ligase 2</fullName>
        <ecNumber evidence="1">6.1.1.5</ecNumber>
    </recommendedName>
    <alternativeName>
        <fullName evidence="1">Isoleucyl-tRNA synthetase 2</fullName>
        <shortName evidence="1">IleRS 2</shortName>
    </alternativeName>
</protein>
<reference key="1">
    <citation type="journal article" date="2003" name="Nature">
        <title>The genome sequence of Bacillus anthracis Ames and comparison to closely related bacteria.</title>
        <authorList>
            <person name="Read T.D."/>
            <person name="Peterson S.N."/>
            <person name="Tourasse N.J."/>
            <person name="Baillie L.W."/>
            <person name="Paulsen I.T."/>
            <person name="Nelson K.E."/>
            <person name="Tettelin H."/>
            <person name="Fouts D.E."/>
            <person name="Eisen J.A."/>
            <person name="Gill S.R."/>
            <person name="Holtzapple E.K."/>
            <person name="Okstad O.A."/>
            <person name="Helgason E."/>
            <person name="Rilstone J."/>
            <person name="Wu M."/>
            <person name="Kolonay J.F."/>
            <person name="Beanan M.J."/>
            <person name="Dodson R.J."/>
            <person name="Brinkac L.M."/>
            <person name="Gwinn M.L."/>
            <person name="DeBoy R.T."/>
            <person name="Madpu R."/>
            <person name="Daugherty S.C."/>
            <person name="Durkin A.S."/>
            <person name="Haft D.H."/>
            <person name="Nelson W.C."/>
            <person name="Peterson J.D."/>
            <person name="Pop M."/>
            <person name="Khouri H.M."/>
            <person name="Radune D."/>
            <person name="Benton J.L."/>
            <person name="Mahamoud Y."/>
            <person name="Jiang L."/>
            <person name="Hance I.R."/>
            <person name="Weidman J.F."/>
            <person name="Berry K.J."/>
            <person name="Plaut R.D."/>
            <person name="Wolf A.M."/>
            <person name="Watkins K.L."/>
            <person name="Nierman W.C."/>
            <person name="Hazen A."/>
            <person name="Cline R.T."/>
            <person name="Redmond C."/>
            <person name="Thwaite J.E."/>
            <person name="White O."/>
            <person name="Salzberg S.L."/>
            <person name="Thomason B."/>
            <person name="Friedlander A.M."/>
            <person name="Koehler T.M."/>
            <person name="Hanna P.C."/>
            <person name="Kolstoe A.-B."/>
            <person name="Fraser C.M."/>
        </authorList>
    </citation>
    <scope>NUCLEOTIDE SEQUENCE [LARGE SCALE GENOMIC DNA]</scope>
    <source>
        <strain>Ames / isolate Porton</strain>
    </source>
</reference>
<reference key="2">
    <citation type="journal article" date="2009" name="J. Bacteriol.">
        <title>The complete genome sequence of Bacillus anthracis Ames 'Ancestor'.</title>
        <authorList>
            <person name="Ravel J."/>
            <person name="Jiang L."/>
            <person name="Stanley S.T."/>
            <person name="Wilson M.R."/>
            <person name="Decker R.S."/>
            <person name="Read T.D."/>
            <person name="Worsham P."/>
            <person name="Keim P.S."/>
            <person name="Salzberg S.L."/>
            <person name="Fraser-Liggett C.M."/>
            <person name="Rasko D.A."/>
        </authorList>
    </citation>
    <scope>NUCLEOTIDE SEQUENCE [LARGE SCALE GENOMIC DNA]</scope>
    <source>
        <strain>Ames ancestor</strain>
    </source>
</reference>
<reference key="3">
    <citation type="submission" date="2004-01" db="EMBL/GenBank/DDBJ databases">
        <title>Complete genome sequence of Bacillus anthracis Sterne.</title>
        <authorList>
            <person name="Brettin T.S."/>
            <person name="Bruce D."/>
            <person name="Challacombe J.F."/>
            <person name="Gilna P."/>
            <person name="Han C."/>
            <person name="Hill K."/>
            <person name="Hitchcock P."/>
            <person name="Jackson P."/>
            <person name="Keim P."/>
            <person name="Longmire J."/>
            <person name="Lucas S."/>
            <person name="Okinaka R."/>
            <person name="Richardson P."/>
            <person name="Rubin E."/>
            <person name="Tice H."/>
        </authorList>
    </citation>
    <scope>NUCLEOTIDE SEQUENCE [LARGE SCALE GENOMIC DNA]</scope>
    <source>
        <strain>Sterne</strain>
    </source>
</reference>
<comment type="function">
    <text evidence="1">Catalyzes the attachment of isoleucine to tRNA(Ile). As IleRS can inadvertently accommodate and process structurally similar amino acids such as valine, to avoid such errors it has two additional distinct tRNA(Ile)-dependent editing activities. One activity is designated as 'pretransfer' editing and involves the hydrolysis of activated Val-AMP. The other activity is designated 'posttransfer' editing and involves deacylation of mischarged Val-tRNA(Ile).</text>
</comment>
<comment type="catalytic activity">
    <reaction evidence="1">
        <text>tRNA(Ile) + L-isoleucine + ATP = L-isoleucyl-tRNA(Ile) + AMP + diphosphate</text>
        <dbReference type="Rhea" id="RHEA:11060"/>
        <dbReference type="Rhea" id="RHEA-COMP:9666"/>
        <dbReference type="Rhea" id="RHEA-COMP:9695"/>
        <dbReference type="ChEBI" id="CHEBI:30616"/>
        <dbReference type="ChEBI" id="CHEBI:33019"/>
        <dbReference type="ChEBI" id="CHEBI:58045"/>
        <dbReference type="ChEBI" id="CHEBI:78442"/>
        <dbReference type="ChEBI" id="CHEBI:78528"/>
        <dbReference type="ChEBI" id="CHEBI:456215"/>
        <dbReference type="EC" id="6.1.1.5"/>
    </reaction>
</comment>
<comment type="cofactor">
    <cofactor evidence="1">
        <name>Zn(2+)</name>
        <dbReference type="ChEBI" id="CHEBI:29105"/>
    </cofactor>
</comment>
<comment type="subunit">
    <text evidence="1">Monomer.</text>
</comment>
<comment type="subcellular location">
    <subcellularLocation>
        <location evidence="1">Cytoplasm</location>
    </subcellularLocation>
</comment>
<comment type="domain">
    <text evidence="1">IleRS has two distinct active sites: one for aminoacylation and one for editing. The misactivated valine is translocated from the active site to the editing site, which sterically excludes the correctly activated isoleucine. The single editing site contains two valyl binding pockets, one specific for each substrate (Val-AMP or Val-tRNA(Ile)).</text>
</comment>
<comment type="similarity">
    <text evidence="1">Belongs to the class-I aminoacyl-tRNA synthetase family. IleS type 2 subfamily.</text>
</comment>
<feature type="chain" id="PRO_0000098515" description="Isoleucine--tRNA ligase 2">
    <location>
        <begin position="1"/>
        <end position="1033"/>
    </location>
</feature>
<feature type="short sequence motif" description="'HIGH' region">
    <location>
        <begin position="47"/>
        <end position="57"/>
    </location>
</feature>
<feature type="short sequence motif" description="'KMSKS' region">
    <location>
        <begin position="590"/>
        <end position="594"/>
    </location>
</feature>
<feature type="binding site" evidence="1">
    <location>
        <position position="593"/>
    </location>
    <ligand>
        <name>ATP</name>
        <dbReference type="ChEBI" id="CHEBI:30616"/>
    </ligand>
</feature>
<dbReference type="EC" id="6.1.1.5" evidence="1"/>
<dbReference type="EMBL" id="AE016879">
    <property type="protein sequence ID" value="AAP26060.1"/>
    <property type="molecule type" value="Genomic_DNA"/>
</dbReference>
<dbReference type="EMBL" id="AE017334">
    <property type="protein sequence ID" value="AAT31298.1"/>
    <property type="molecule type" value="Genomic_DNA"/>
</dbReference>
<dbReference type="EMBL" id="AE017225">
    <property type="protein sequence ID" value="AAT54341.1"/>
    <property type="molecule type" value="Genomic_DNA"/>
</dbReference>
<dbReference type="RefSeq" id="NP_844574.1">
    <property type="nucleotide sequence ID" value="NC_003997.3"/>
</dbReference>
<dbReference type="RefSeq" id="YP_028290.1">
    <property type="nucleotide sequence ID" value="NC_005945.1"/>
</dbReference>
<dbReference type="SMR" id="Q81R75"/>
<dbReference type="IntAct" id="Q81R75">
    <property type="interactions" value="1"/>
</dbReference>
<dbReference type="STRING" id="261594.GBAA_2181"/>
<dbReference type="DNASU" id="1085720"/>
<dbReference type="GeneID" id="45022084"/>
<dbReference type="KEGG" id="ban:BA_2181"/>
<dbReference type="KEGG" id="bar:GBAA_2181"/>
<dbReference type="KEGG" id="bat:BAS2027"/>
<dbReference type="PATRIC" id="fig|198094.11.peg.2150"/>
<dbReference type="eggNOG" id="COG0060">
    <property type="taxonomic scope" value="Bacteria"/>
</dbReference>
<dbReference type="HOGENOM" id="CLU_001493_1_1_9"/>
<dbReference type="OMA" id="EIIVIHK"/>
<dbReference type="OrthoDB" id="9810365at2"/>
<dbReference type="Proteomes" id="UP000000427">
    <property type="component" value="Chromosome"/>
</dbReference>
<dbReference type="Proteomes" id="UP000000594">
    <property type="component" value="Chromosome"/>
</dbReference>
<dbReference type="GO" id="GO:0005737">
    <property type="term" value="C:cytoplasm"/>
    <property type="evidence" value="ECO:0007669"/>
    <property type="project" value="UniProtKB-SubCell"/>
</dbReference>
<dbReference type="GO" id="GO:0002161">
    <property type="term" value="F:aminoacyl-tRNA deacylase activity"/>
    <property type="evidence" value="ECO:0007669"/>
    <property type="project" value="InterPro"/>
</dbReference>
<dbReference type="GO" id="GO:0005524">
    <property type="term" value="F:ATP binding"/>
    <property type="evidence" value="ECO:0007669"/>
    <property type="project" value="UniProtKB-UniRule"/>
</dbReference>
<dbReference type="GO" id="GO:0004822">
    <property type="term" value="F:isoleucine-tRNA ligase activity"/>
    <property type="evidence" value="ECO:0007669"/>
    <property type="project" value="UniProtKB-UniRule"/>
</dbReference>
<dbReference type="GO" id="GO:0000049">
    <property type="term" value="F:tRNA binding"/>
    <property type="evidence" value="ECO:0007669"/>
    <property type="project" value="InterPro"/>
</dbReference>
<dbReference type="GO" id="GO:0008270">
    <property type="term" value="F:zinc ion binding"/>
    <property type="evidence" value="ECO:0007669"/>
    <property type="project" value="UniProtKB-UniRule"/>
</dbReference>
<dbReference type="GO" id="GO:0006428">
    <property type="term" value="P:isoleucyl-tRNA aminoacylation"/>
    <property type="evidence" value="ECO:0007669"/>
    <property type="project" value="UniProtKB-UniRule"/>
</dbReference>
<dbReference type="CDD" id="cd07961">
    <property type="entry name" value="Anticodon_Ia_Ile_ABEc"/>
    <property type="match status" value="1"/>
</dbReference>
<dbReference type="CDD" id="cd00818">
    <property type="entry name" value="IleRS_core"/>
    <property type="match status" value="1"/>
</dbReference>
<dbReference type="FunFam" id="1.10.730.10:FF:000038">
    <property type="entry name" value="Isoleucine--tRNA ligase"/>
    <property type="match status" value="1"/>
</dbReference>
<dbReference type="FunFam" id="3.40.50.620:FF:000063">
    <property type="entry name" value="Isoleucine--tRNA ligase"/>
    <property type="match status" value="1"/>
</dbReference>
<dbReference type="FunFam" id="3.40.50.620:FF:000075">
    <property type="entry name" value="Isoleucine--tRNA ligase"/>
    <property type="match status" value="1"/>
</dbReference>
<dbReference type="Gene3D" id="3.40.50.620">
    <property type="entry name" value="HUPs"/>
    <property type="match status" value="2"/>
</dbReference>
<dbReference type="Gene3D" id="1.10.730.10">
    <property type="entry name" value="Isoleucyl-tRNA Synthetase, Domain 1"/>
    <property type="match status" value="1"/>
</dbReference>
<dbReference type="HAMAP" id="MF_02003">
    <property type="entry name" value="Ile_tRNA_synth_type2"/>
    <property type="match status" value="1"/>
</dbReference>
<dbReference type="InterPro" id="IPR001412">
    <property type="entry name" value="aa-tRNA-synth_I_CS"/>
</dbReference>
<dbReference type="InterPro" id="IPR002300">
    <property type="entry name" value="aa-tRNA-synth_Ia"/>
</dbReference>
<dbReference type="InterPro" id="IPR033709">
    <property type="entry name" value="Anticodon_Ile_ABEc"/>
</dbReference>
<dbReference type="InterPro" id="IPR002301">
    <property type="entry name" value="Ile-tRNA-ligase"/>
</dbReference>
<dbReference type="InterPro" id="IPR023586">
    <property type="entry name" value="Ile-tRNA-ligase_type2"/>
</dbReference>
<dbReference type="InterPro" id="IPR013155">
    <property type="entry name" value="M/V/L/I-tRNA-synth_anticd-bd"/>
</dbReference>
<dbReference type="InterPro" id="IPR014729">
    <property type="entry name" value="Rossmann-like_a/b/a_fold"/>
</dbReference>
<dbReference type="InterPro" id="IPR009080">
    <property type="entry name" value="tRNAsynth_Ia_anticodon-bd"/>
</dbReference>
<dbReference type="InterPro" id="IPR009008">
    <property type="entry name" value="Val/Leu/Ile-tRNA-synth_edit"/>
</dbReference>
<dbReference type="NCBIfam" id="TIGR00392">
    <property type="entry name" value="ileS"/>
    <property type="match status" value="1"/>
</dbReference>
<dbReference type="PANTHER" id="PTHR42780:SF1">
    <property type="entry name" value="ISOLEUCINE--TRNA LIGASE, CYTOPLASMIC"/>
    <property type="match status" value="1"/>
</dbReference>
<dbReference type="PANTHER" id="PTHR42780">
    <property type="entry name" value="SOLEUCYL-TRNA SYNTHETASE"/>
    <property type="match status" value="1"/>
</dbReference>
<dbReference type="Pfam" id="PF08264">
    <property type="entry name" value="Anticodon_1"/>
    <property type="match status" value="1"/>
</dbReference>
<dbReference type="Pfam" id="PF19302">
    <property type="entry name" value="DUF5915"/>
    <property type="match status" value="1"/>
</dbReference>
<dbReference type="Pfam" id="PF00133">
    <property type="entry name" value="tRNA-synt_1"/>
    <property type="match status" value="1"/>
</dbReference>
<dbReference type="PRINTS" id="PR00984">
    <property type="entry name" value="TRNASYNTHILE"/>
</dbReference>
<dbReference type="SUPFAM" id="SSF47323">
    <property type="entry name" value="Anticodon-binding domain of a subclass of class I aminoacyl-tRNA synthetases"/>
    <property type="match status" value="2"/>
</dbReference>
<dbReference type="SUPFAM" id="SSF52374">
    <property type="entry name" value="Nucleotidylyl transferase"/>
    <property type="match status" value="1"/>
</dbReference>
<dbReference type="SUPFAM" id="SSF50677">
    <property type="entry name" value="ValRS/IleRS/LeuRS editing domain"/>
    <property type="match status" value="1"/>
</dbReference>
<dbReference type="PROSITE" id="PS00178">
    <property type="entry name" value="AA_TRNA_LIGASE_I"/>
    <property type="match status" value="1"/>
</dbReference>
<keyword id="KW-0030">Aminoacyl-tRNA synthetase</keyword>
<keyword id="KW-0067">ATP-binding</keyword>
<keyword id="KW-0963">Cytoplasm</keyword>
<keyword id="KW-0436">Ligase</keyword>
<keyword id="KW-0479">Metal-binding</keyword>
<keyword id="KW-0547">Nucleotide-binding</keyword>
<keyword id="KW-0648">Protein biosynthesis</keyword>
<keyword id="KW-1185">Reference proteome</keyword>
<keyword id="KW-0862">Zinc</keyword>